<organism>
    <name type="scientific">Homo sapiens</name>
    <name type="common">Human</name>
    <dbReference type="NCBI Taxonomy" id="9606"/>
    <lineage>
        <taxon>Eukaryota</taxon>
        <taxon>Metazoa</taxon>
        <taxon>Chordata</taxon>
        <taxon>Craniata</taxon>
        <taxon>Vertebrata</taxon>
        <taxon>Euteleostomi</taxon>
        <taxon>Mammalia</taxon>
        <taxon>Eutheria</taxon>
        <taxon>Euarchontoglires</taxon>
        <taxon>Primates</taxon>
        <taxon>Haplorrhini</taxon>
        <taxon>Catarrhini</taxon>
        <taxon>Hominidae</taxon>
        <taxon>Homo</taxon>
    </lineage>
</organism>
<protein>
    <recommendedName>
        <fullName>Microfibrillar-associated protein 3-like</fullName>
    </recommendedName>
    <alternativeName>
        <fullName evidence="9">Testis development protein NYD-SP9</fullName>
    </alternativeName>
</protein>
<accession>O75121</accession>
<accession>A8K1X6</accession>
<accession>D3DP35</accession>
<accession>Q4W5N7</accession>
<accession>Q4W5N9</accession>
<accession>Q6TNA8</accession>
<accession>Q9BVE1</accession>
<accession>Q9BXK0</accession>
<comment type="function">
    <text evidence="6">May participate in the nuclear signaling of EGFR and MAPK1/ERK2. May a have a role in metastasis.</text>
</comment>
<comment type="subcellular location">
    <subcellularLocation>
        <location evidence="6">Cell membrane</location>
        <topology evidence="10">Single-pass type I membrane protein</topology>
    </subcellularLocation>
    <subcellularLocation>
        <location evidence="6">Nucleus</location>
    </subcellularLocation>
    <subcellularLocation>
        <location evidence="6">Cytoplasm</location>
    </subcellularLocation>
    <text evidence="6">Mainly localized in the nucleus (PubMed:24735981).</text>
</comment>
<comment type="alternative products">
    <event type="alternative splicing"/>
    <isoform>
        <id>O75121-1</id>
        <name>1</name>
        <sequence type="displayed"/>
    </isoform>
    <isoform>
        <id>O75121-2</id>
        <name>2</name>
        <sequence type="described" ref="VSP_011100"/>
    </isoform>
    <isoform>
        <id>O75121-3</id>
        <name>3</name>
        <sequence type="described" ref="VSP_014094 VSP_014095"/>
    </isoform>
</comment>
<comment type="tissue specificity">
    <text evidence="7">Highly expressed in testis.</text>
</comment>
<comment type="caution">
    <text evidence="10">Protein kinase activity is reported (PubMed:24735981). However, no protein kinase domain is detected by any prediction method (PROSITE, Pfam). Its enzyme activity is therefore unsure.</text>
</comment>
<comment type="sequence caution" evidence="10">
    <conflict type="erroneous initiation">
        <sequence resource="EMBL-CDS" id="BAA31601"/>
    </conflict>
    <text>Extended N-terminus.</text>
</comment>
<evidence type="ECO:0000250" key="1">
    <source>
        <dbReference type="UniProtKB" id="Q6AYP2"/>
    </source>
</evidence>
<evidence type="ECO:0000250" key="2">
    <source>
        <dbReference type="UniProtKB" id="Q9D3X9"/>
    </source>
</evidence>
<evidence type="ECO:0000255" key="3"/>
<evidence type="ECO:0000255" key="4">
    <source>
        <dbReference type="PROSITE-ProRule" id="PRU00114"/>
    </source>
</evidence>
<evidence type="ECO:0000256" key="5">
    <source>
        <dbReference type="SAM" id="MobiDB-lite"/>
    </source>
</evidence>
<evidence type="ECO:0000269" key="6">
    <source>
    </source>
</evidence>
<evidence type="ECO:0000269" key="7">
    <source ref="1"/>
</evidence>
<evidence type="ECO:0000303" key="8">
    <source>
    </source>
</evidence>
<evidence type="ECO:0000303" key="9">
    <source ref="1"/>
</evidence>
<evidence type="ECO:0000305" key="10"/>
<feature type="signal peptide" evidence="3">
    <location>
        <begin position="1"/>
        <end position="28"/>
    </location>
</feature>
<feature type="chain" id="PRO_0000014869" description="Microfibrillar-associated protein 3-like">
    <location>
        <begin position="29"/>
        <end position="409"/>
    </location>
</feature>
<feature type="topological domain" description="Extracellular" evidence="3">
    <location>
        <begin position="29"/>
        <end position="149"/>
    </location>
</feature>
<feature type="transmembrane region" description="Helical" evidence="3">
    <location>
        <begin position="150"/>
        <end position="172"/>
    </location>
</feature>
<feature type="topological domain" description="Cytoplasmic" evidence="3">
    <location>
        <begin position="173"/>
        <end position="409"/>
    </location>
</feature>
<feature type="domain" description="Ig-like C2-type">
    <location>
        <begin position="47"/>
        <end position="141"/>
    </location>
</feature>
<feature type="region of interest" description="Disordered" evidence="5">
    <location>
        <begin position="292"/>
        <end position="311"/>
    </location>
</feature>
<feature type="region of interest" description="Disordered" evidence="5">
    <location>
        <begin position="320"/>
        <end position="385"/>
    </location>
</feature>
<feature type="compositionally biased region" description="Basic and acidic residues" evidence="5">
    <location>
        <begin position="339"/>
        <end position="355"/>
    </location>
</feature>
<feature type="compositionally biased region" description="Low complexity" evidence="5">
    <location>
        <begin position="363"/>
        <end position="377"/>
    </location>
</feature>
<feature type="modified residue" description="Phosphotyrosine; by EGFR" evidence="6">
    <location>
        <position position="287"/>
    </location>
</feature>
<feature type="modified residue" description="Phosphoserine" evidence="2">
    <location>
        <position position="298"/>
    </location>
</feature>
<feature type="modified residue" description="Phosphoserine" evidence="2">
    <location>
        <position position="303"/>
    </location>
</feature>
<feature type="modified residue" description="Phosphoserine" evidence="2">
    <location>
        <position position="306"/>
    </location>
</feature>
<feature type="modified residue" description="Phosphoserine" evidence="1">
    <location>
        <position position="307"/>
    </location>
</feature>
<feature type="glycosylation site" description="N-linked (GlcNAc...) asparagine" evidence="3">
    <location>
        <position position="33"/>
    </location>
</feature>
<feature type="glycosylation site" description="N-linked (GlcNAc...) asparagine" evidence="3">
    <location>
        <position position="37"/>
    </location>
</feature>
<feature type="glycosylation site" description="N-linked (GlcNAc...) asparagine" evidence="3">
    <location>
        <position position="67"/>
    </location>
</feature>
<feature type="glycosylation site" description="N-linked (GlcNAc...) asparagine" evidence="3">
    <location>
        <position position="111"/>
    </location>
</feature>
<feature type="glycosylation site" description="N-linked (GlcNAc...) asparagine" evidence="3">
    <location>
        <position position="135"/>
    </location>
</feature>
<feature type="disulfide bond" evidence="4">
    <location>
        <begin position="68"/>
        <end position="125"/>
    </location>
</feature>
<feature type="splice variant" id="VSP_011100" description="In isoform 2." evidence="8 9">
    <location>
        <begin position="1"/>
        <end position="103"/>
    </location>
</feature>
<feature type="splice variant" id="VSP_014094" description="In isoform 3." evidence="8">
    <original>KW</original>
    <variation>RL</variation>
    <location>
        <begin position="101"/>
        <end position="102"/>
    </location>
</feature>
<feature type="splice variant" id="VSP_014095" description="In isoform 3." evidence="8">
    <location>
        <begin position="103"/>
        <end position="409"/>
    </location>
</feature>
<feature type="sequence conflict" description="In Ref. 2; AAS55434." evidence="10" ref="2">
    <original>D</original>
    <variation>N</variation>
    <location>
        <position position="362"/>
    </location>
</feature>
<dbReference type="EMBL" id="AF327560">
    <property type="protein sequence ID" value="AAK15700.1"/>
    <property type="molecule type" value="mRNA"/>
</dbReference>
<dbReference type="EMBL" id="AY391838">
    <property type="protein sequence ID" value="AAS55434.1"/>
    <property type="molecule type" value="mRNA"/>
</dbReference>
<dbReference type="EMBL" id="AB014526">
    <property type="protein sequence ID" value="BAA31601.2"/>
    <property type="status" value="ALT_INIT"/>
    <property type="molecule type" value="mRNA"/>
</dbReference>
<dbReference type="EMBL" id="AK290041">
    <property type="protein sequence ID" value="BAF82730.1"/>
    <property type="molecule type" value="mRNA"/>
</dbReference>
<dbReference type="EMBL" id="AC084866">
    <property type="protein sequence ID" value="AAY41028.1"/>
    <property type="molecule type" value="Genomic_DNA"/>
</dbReference>
<dbReference type="EMBL" id="AC084866">
    <property type="protein sequence ID" value="AAY41029.1"/>
    <property type="molecule type" value="Genomic_DNA"/>
</dbReference>
<dbReference type="EMBL" id="CH471056">
    <property type="protein sequence ID" value="EAX04773.1"/>
    <property type="molecule type" value="Genomic_DNA"/>
</dbReference>
<dbReference type="EMBL" id="CH471056">
    <property type="protein sequence ID" value="EAX04774.1"/>
    <property type="molecule type" value="Genomic_DNA"/>
</dbReference>
<dbReference type="EMBL" id="CH471056">
    <property type="protein sequence ID" value="EAX04775.1"/>
    <property type="molecule type" value="Genomic_DNA"/>
</dbReference>
<dbReference type="EMBL" id="BC001279">
    <property type="protein sequence ID" value="AAH01279.1"/>
    <property type="molecule type" value="mRNA"/>
</dbReference>
<dbReference type="EMBL" id="BC066912">
    <property type="protein sequence ID" value="AAH66912.1"/>
    <property type="molecule type" value="mRNA"/>
</dbReference>
<dbReference type="CCDS" id="CCDS34103.1">
    <molecule id="O75121-1"/>
</dbReference>
<dbReference type="CCDS" id="CCDS43281.1">
    <molecule id="O75121-2"/>
</dbReference>
<dbReference type="RefSeq" id="NP_001009554.1">
    <molecule id="O75121-2"/>
    <property type="nucleotide sequence ID" value="NM_001009554.4"/>
</dbReference>
<dbReference type="RefSeq" id="NP_001288576.1">
    <molecule id="O75121-2"/>
    <property type="nucleotide sequence ID" value="NM_001301647.2"/>
</dbReference>
<dbReference type="RefSeq" id="NP_001288577.1">
    <molecule id="O75121-2"/>
    <property type="nucleotide sequence ID" value="NM_001301648.2"/>
</dbReference>
<dbReference type="RefSeq" id="NP_067679.6">
    <molecule id="O75121-1"/>
    <property type="nucleotide sequence ID" value="NM_021647.7"/>
</dbReference>
<dbReference type="RefSeq" id="XP_005263425.1">
    <property type="nucleotide sequence ID" value="XM_005263368.3"/>
</dbReference>
<dbReference type="RefSeq" id="XP_016864357.1">
    <property type="nucleotide sequence ID" value="XM_017008868.1"/>
</dbReference>
<dbReference type="RefSeq" id="XP_016864358.1">
    <property type="nucleotide sequence ID" value="XM_017008869.1"/>
</dbReference>
<dbReference type="RefSeq" id="XP_016864359.1">
    <property type="nucleotide sequence ID" value="XM_017008870.1"/>
</dbReference>
<dbReference type="RefSeq" id="XP_016864360.1">
    <molecule id="O75121-1"/>
    <property type="nucleotide sequence ID" value="XM_017008871.2"/>
</dbReference>
<dbReference type="RefSeq" id="XP_047272416.1">
    <molecule id="O75121-1"/>
    <property type="nucleotide sequence ID" value="XM_047416460.1"/>
</dbReference>
<dbReference type="RefSeq" id="XP_047272417.1">
    <molecule id="O75121-2"/>
    <property type="nucleotide sequence ID" value="XM_047416461.1"/>
</dbReference>
<dbReference type="RefSeq" id="XP_054207309.1">
    <molecule id="O75121-2"/>
    <property type="nucleotide sequence ID" value="XM_054351334.1"/>
</dbReference>
<dbReference type="RefSeq" id="XP_054207310.1">
    <molecule id="O75121-1"/>
    <property type="nucleotide sequence ID" value="XM_054351335.1"/>
</dbReference>
<dbReference type="BioGRID" id="115183">
    <property type="interactions" value="3"/>
</dbReference>
<dbReference type="FunCoup" id="O75121">
    <property type="interactions" value="1388"/>
</dbReference>
<dbReference type="IntAct" id="O75121">
    <property type="interactions" value="1"/>
</dbReference>
<dbReference type="STRING" id="9606.ENSP00000354583"/>
<dbReference type="GlyCosmos" id="O75121">
    <property type="glycosylation" value="5 sites, No reported glycans"/>
</dbReference>
<dbReference type="GlyGen" id="O75121">
    <property type="glycosylation" value="7 sites, 1 O-linked glycan (1 site)"/>
</dbReference>
<dbReference type="iPTMnet" id="O75121"/>
<dbReference type="PhosphoSitePlus" id="O75121"/>
<dbReference type="SwissPalm" id="O75121"/>
<dbReference type="BioMuta" id="MFAP3L"/>
<dbReference type="jPOST" id="O75121"/>
<dbReference type="MassIVE" id="O75121"/>
<dbReference type="PaxDb" id="9606-ENSP00000354583"/>
<dbReference type="PeptideAtlas" id="O75121"/>
<dbReference type="ProteomicsDB" id="49774">
    <molecule id="O75121-1"/>
</dbReference>
<dbReference type="ProteomicsDB" id="49775">
    <molecule id="O75121-2"/>
</dbReference>
<dbReference type="ProteomicsDB" id="49776">
    <molecule id="O75121-3"/>
</dbReference>
<dbReference type="Antibodypedia" id="17138">
    <property type="antibodies" value="97 antibodies from 20 providers"/>
</dbReference>
<dbReference type="DNASU" id="9848"/>
<dbReference type="Ensembl" id="ENST00000361618.4">
    <molecule id="O75121-1"/>
    <property type="protein sequence ID" value="ENSP00000354583.3"/>
    <property type="gene ID" value="ENSG00000198948.12"/>
</dbReference>
<dbReference type="Ensembl" id="ENST00000393702.7">
    <molecule id="O75121-3"/>
    <property type="protein sequence ID" value="ENSP00000377305.2"/>
    <property type="gene ID" value="ENSG00000198948.12"/>
</dbReference>
<dbReference type="Ensembl" id="ENST00000393704.3">
    <molecule id="O75121-2"/>
    <property type="protein sequence ID" value="ENSP00000377307.3"/>
    <property type="gene ID" value="ENSG00000198948.12"/>
</dbReference>
<dbReference type="Ensembl" id="ENST00000506110.1">
    <molecule id="O75121-3"/>
    <property type="protein sequence ID" value="ENSP00000422571.1"/>
    <property type="gene ID" value="ENSG00000198948.12"/>
</dbReference>
<dbReference type="GeneID" id="9848"/>
<dbReference type="KEGG" id="hsa:9848"/>
<dbReference type="MANE-Select" id="ENST00000361618.4">
    <property type="protein sequence ID" value="ENSP00000354583.3"/>
    <property type="RefSeq nucleotide sequence ID" value="NM_021647.8"/>
    <property type="RefSeq protein sequence ID" value="NP_067679.6"/>
</dbReference>
<dbReference type="UCSC" id="uc003isn.4">
    <molecule id="O75121-1"/>
    <property type="organism name" value="human"/>
</dbReference>
<dbReference type="AGR" id="HGNC:29083"/>
<dbReference type="CTD" id="9848"/>
<dbReference type="DisGeNET" id="9848"/>
<dbReference type="GeneCards" id="MFAP3L"/>
<dbReference type="HGNC" id="HGNC:29083">
    <property type="gene designation" value="MFAP3L"/>
</dbReference>
<dbReference type="HPA" id="ENSG00000198948">
    <property type="expression patterns" value="Tissue enhanced (testis)"/>
</dbReference>
<dbReference type="neXtProt" id="NX_O75121"/>
<dbReference type="OpenTargets" id="ENSG00000198948"/>
<dbReference type="PharmGKB" id="PA134974574"/>
<dbReference type="VEuPathDB" id="HostDB:ENSG00000198948"/>
<dbReference type="eggNOG" id="ENOG502QW9J">
    <property type="taxonomic scope" value="Eukaryota"/>
</dbReference>
<dbReference type="GeneTree" id="ENSGT00390000011576"/>
<dbReference type="HOGENOM" id="CLU_056017_2_0_1"/>
<dbReference type="InParanoid" id="O75121"/>
<dbReference type="OMA" id="CVLIDCN"/>
<dbReference type="OrthoDB" id="8611351at2759"/>
<dbReference type="PAN-GO" id="O75121">
    <property type="GO annotations" value="3 GO annotations based on evolutionary models"/>
</dbReference>
<dbReference type="PhylomeDB" id="O75121"/>
<dbReference type="TreeFam" id="TF333205"/>
<dbReference type="PathwayCommons" id="O75121"/>
<dbReference type="SignaLink" id="O75121"/>
<dbReference type="BioGRID-ORCS" id="9848">
    <property type="hits" value="10 hits in 1145 CRISPR screens"/>
</dbReference>
<dbReference type="ChiTaRS" id="MFAP3L">
    <property type="organism name" value="human"/>
</dbReference>
<dbReference type="GenomeRNAi" id="9848"/>
<dbReference type="Pharos" id="O75121">
    <property type="development level" value="Tdark"/>
</dbReference>
<dbReference type="PRO" id="PR:O75121"/>
<dbReference type="Proteomes" id="UP000005640">
    <property type="component" value="Chromosome 4"/>
</dbReference>
<dbReference type="RNAct" id="O75121">
    <property type="molecule type" value="protein"/>
</dbReference>
<dbReference type="Bgee" id="ENSG00000198948">
    <property type="expression patterns" value="Expressed in sperm and 189 other cell types or tissues"/>
</dbReference>
<dbReference type="ExpressionAtlas" id="O75121">
    <property type="expression patterns" value="baseline and differential"/>
</dbReference>
<dbReference type="GO" id="GO:0030054">
    <property type="term" value="C:cell junction"/>
    <property type="evidence" value="ECO:0000314"/>
    <property type="project" value="HPA"/>
</dbReference>
<dbReference type="GO" id="GO:0005737">
    <property type="term" value="C:cytoplasm"/>
    <property type="evidence" value="ECO:0000314"/>
    <property type="project" value="UniProtKB"/>
</dbReference>
<dbReference type="GO" id="GO:0043005">
    <property type="term" value="C:neuron projection"/>
    <property type="evidence" value="ECO:0000318"/>
    <property type="project" value="GO_Central"/>
</dbReference>
<dbReference type="GO" id="GO:0005654">
    <property type="term" value="C:nucleoplasm"/>
    <property type="evidence" value="ECO:0000314"/>
    <property type="project" value="HPA"/>
</dbReference>
<dbReference type="GO" id="GO:0005634">
    <property type="term" value="C:nucleus"/>
    <property type="evidence" value="ECO:0000314"/>
    <property type="project" value="UniProtKB"/>
</dbReference>
<dbReference type="GO" id="GO:0005886">
    <property type="term" value="C:plasma membrane"/>
    <property type="evidence" value="ECO:0000314"/>
    <property type="project" value="UniProtKB"/>
</dbReference>
<dbReference type="CDD" id="cd00096">
    <property type="entry name" value="Ig"/>
    <property type="match status" value="1"/>
</dbReference>
<dbReference type="FunFam" id="2.60.40.10:FF:001040">
    <property type="entry name" value="Microfibrillar-associated protein 3-like protein"/>
    <property type="match status" value="1"/>
</dbReference>
<dbReference type="Gene3D" id="2.60.40.10">
    <property type="entry name" value="Immunoglobulins"/>
    <property type="match status" value="1"/>
</dbReference>
<dbReference type="InterPro" id="IPR007110">
    <property type="entry name" value="Ig-like_dom"/>
</dbReference>
<dbReference type="InterPro" id="IPR036179">
    <property type="entry name" value="Ig-like_dom_sf"/>
</dbReference>
<dbReference type="InterPro" id="IPR013783">
    <property type="entry name" value="Ig-like_fold"/>
</dbReference>
<dbReference type="InterPro" id="IPR013098">
    <property type="entry name" value="Ig_I-set"/>
</dbReference>
<dbReference type="InterPro" id="IPR003599">
    <property type="entry name" value="Ig_sub"/>
</dbReference>
<dbReference type="InterPro" id="IPR003598">
    <property type="entry name" value="Ig_sub2"/>
</dbReference>
<dbReference type="PANTHER" id="PTHR14340">
    <property type="entry name" value="MICROFIBRIL-ASSOCIATED GLYCOPROTEIN 3"/>
    <property type="match status" value="1"/>
</dbReference>
<dbReference type="PANTHER" id="PTHR14340:SF2">
    <property type="entry name" value="MICROFIBRILLAR-ASSOCIATED PROTEIN 3-LIKE"/>
    <property type="match status" value="1"/>
</dbReference>
<dbReference type="Pfam" id="PF07679">
    <property type="entry name" value="I-set"/>
    <property type="match status" value="1"/>
</dbReference>
<dbReference type="SMART" id="SM00409">
    <property type="entry name" value="IG"/>
    <property type="match status" value="1"/>
</dbReference>
<dbReference type="SMART" id="SM00408">
    <property type="entry name" value="IGc2"/>
    <property type="match status" value="1"/>
</dbReference>
<dbReference type="SUPFAM" id="SSF48726">
    <property type="entry name" value="Immunoglobulin"/>
    <property type="match status" value="1"/>
</dbReference>
<dbReference type="PROSITE" id="PS50835">
    <property type="entry name" value="IG_LIKE"/>
    <property type="match status" value="1"/>
</dbReference>
<name>MFA3L_HUMAN</name>
<keyword id="KW-0025">Alternative splicing</keyword>
<keyword id="KW-1003">Cell membrane</keyword>
<keyword id="KW-0963">Cytoplasm</keyword>
<keyword id="KW-1015">Disulfide bond</keyword>
<keyword id="KW-0325">Glycoprotein</keyword>
<keyword id="KW-0393">Immunoglobulin domain</keyword>
<keyword id="KW-0472">Membrane</keyword>
<keyword id="KW-0539">Nucleus</keyword>
<keyword id="KW-0597">Phosphoprotein</keyword>
<keyword id="KW-1267">Proteomics identification</keyword>
<keyword id="KW-1185">Reference proteome</keyword>
<keyword id="KW-0732">Signal</keyword>
<keyword id="KW-0812">Transmembrane</keyword>
<keyword id="KW-1133">Transmembrane helix</keyword>
<proteinExistence type="evidence at protein level"/>
<gene>
    <name type="primary">MFAP3L</name>
    <name type="synonym">KIAA0626</name>
    <name type="ORF">HSD-39</name>
    <name type="ORF">HSD39</name>
</gene>
<reference key="1">
    <citation type="journal article" date="2002" name="Chin. Sci. Bull.">
        <title>Molecular cloning, identification and characteristics of NYD-SP9: gene coding protein kinase presumably involved in spermatogenesis.</title>
        <authorList>
            <person name="Xiao J.H."/>
            <person name="Yin L.L."/>
            <person name="Li J.M."/>
            <person name="Zhu H."/>
            <person name="Zhou Z.M."/>
            <person name="Zhao B.G."/>
            <person name="Sha J.H."/>
        </authorList>
    </citation>
    <scope>NUCLEOTIDE SEQUENCE [MRNA] (ISOFORM 2)</scope>
    <scope>TISSUE SPECIFICITY</scope>
    <source>
        <tissue>Testis</tissue>
    </source>
</reference>
<reference key="2">
    <citation type="submission" date="2003-09" db="EMBL/GenBank/DDBJ databases">
        <title>A new spermatogenesis-related gene.</title>
        <authorList>
            <person name="Yang C.B."/>
            <person name="Miao S.Y."/>
            <person name="Zhang X.D."/>
            <person name="Qiao Y."/>
            <person name="Liang G."/>
            <person name="Wang L.F."/>
        </authorList>
    </citation>
    <scope>NUCLEOTIDE SEQUENCE [LARGE SCALE MRNA] (ISOFORM 1)</scope>
    <source>
        <tissue>Testis</tissue>
    </source>
</reference>
<reference key="3">
    <citation type="journal article" date="1998" name="DNA Res.">
        <title>Prediction of the coding sequences of unidentified human genes. X. The complete sequences of 100 new cDNA clones from brain which can code for large proteins in vitro.</title>
        <authorList>
            <person name="Ishikawa K."/>
            <person name="Nagase T."/>
            <person name="Suyama M."/>
            <person name="Miyajima N."/>
            <person name="Tanaka A."/>
            <person name="Kotani H."/>
            <person name="Nomura N."/>
            <person name="Ohara O."/>
        </authorList>
    </citation>
    <scope>NUCLEOTIDE SEQUENCE [LARGE SCALE MRNA] (ISOFORM 1)</scope>
    <source>
        <tissue>Brain</tissue>
    </source>
</reference>
<reference key="4">
    <citation type="journal article" date="2004" name="Nat. Genet.">
        <title>Complete sequencing and characterization of 21,243 full-length human cDNAs.</title>
        <authorList>
            <person name="Ota T."/>
            <person name="Suzuki Y."/>
            <person name="Nishikawa T."/>
            <person name="Otsuki T."/>
            <person name="Sugiyama T."/>
            <person name="Irie R."/>
            <person name="Wakamatsu A."/>
            <person name="Hayashi K."/>
            <person name="Sato H."/>
            <person name="Nagai K."/>
            <person name="Kimura K."/>
            <person name="Makita H."/>
            <person name="Sekine M."/>
            <person name="Obayashi M."/>
            <person name="Nishi T."/>
            <person name="Shibahara T."/>
            <person name="Tanaka T."/>
            <person name="Ishii S."/>
            <person name="Yamamoto J."/>
            <person name="Saito K."/>
            <person name="Kawai Y."/>
            <person name="Isono Y."/>
            <person name="Nakamura Y."/>
            <person name="Nagahari K."/>
            <person name="Murakami K."/>
            <person name="Yasuda T."/>
            <person name="Iwayanagi T."/>
            <person name="Wagatsuma M."/>
            <person name="Shiratori A."/>
            <person name="Sudo H."/>
            <person name="Hosoiri T."/>
            <person name="Kaku Y."/>
            <person name="Kodaira H."/>
            <person name="Kondo H."/>
            <person name="Sugawara M."/>
            <person name="Takahashi M."/>
            <person name="Kanda K."/>
            <person name="Yokoi T."/>
            <person name="Furuya T."/>
            <person name="Kikkawa E."/>
            <person name="Omura Y."/>
            <person name="Abe K."/>
            <person name="Kamihara K."/>
            <person name="Katsuta N."/>
            <person name="Sato K."/>
            <person name="Tanikawa M."/>
            <person name="Yamazaki M."/>
            <person name="Ninomiya K."/>
            <person name="Ishibashi T."/>
            <person name="Yamashita H."/>
            <person name="Murakawa K."/>
            <person name="Fujimori K."/>
            <person name="Tanai H."/>
            <person name="Kimata M."/>
            <person name="Watanabe M."/>
            <person name="Hiraoka S."/>
            <person name="Chiba Y."/>
            <person name="Ishida S."/>
            <person name="Ono Y."/>
            <person name="Takiguchi S."/>
            <person name="Watanabe S."/>
            <person name="Yosida M."/>
            <person name="Hotuta T."/>
            <person name="Kusano J."/>
            <person name="Kanehori K."/>
            <person name="Takahashi-Fujii A."/>
            <person name="Hara H."/>
            <person name="Tanase T.-O."/>
            <person name="Nomura Y."/>
            <person name="Togiya S."/>
            <person name="Komai F."/>
            <person name="Hara R."/>
            <person name="Takeuchi K."/>
            <person name="Arita M."/>
            <person name="Imose N."/>
            <person name="Musashino K."/>
            <person name="Yuuki H."/>
            <person name="Oshima A."/>
            <person name="Sasaki N."/>
            <person name="Aotsuka S."/>
            <person name="Yoshikawa Y."/>
            <person name="Matsunawa H."/>
            <person name="Ichihara T."/>
            <person name="Shiohata N."/>
            <person name="Sano S."/>
            <person name="Moriya S."/>
            <person name="Momiyama H."/>
            <person name="Satoh N."/>
            <person name="Takami S."/>
            <person name="Terashima Y."/>
            <person name="Suzuki O."/>
            <person name="Nakagawa S."/>
            <person name="Senoh A."/>
            <person name="Mizoguchi H."/>
            <person name="Goto Y."/>
            <person name="Shimizu F."/>
            <person name="Wakebe H."/>
            <person name="Hishigaki H."/>
            <person name="Watanabe T."/>
            <person name="Sugiyama A."/>
            <person name="Takemoto M."/>
            <person name="Kawakami B."/>
            <person name="Yamazaki M."/>
            <person name="Watanabe K."/>
            <person name="Kumagai A."/>
            <person name="Itakura S."/>
            <person name="Fukuzumi Y."/>
            <person name="Fujimori Y."/>
            <person name="Komiyama M."/>
            <person name="Tashiro H."/>
            <person name="Tanigami A."/>
            <person name="Fujiwara T."/>
            <person name="Ono T."/>
            <person name="Yamada K."/>
            <person name="Fujii Y."/>
            <person name="Ozaki K."/>
            <person name="Hirao M."/>
            <person name="Ohmori Y."/>
            <person name="Kawabata A."/>
            <person name="Hikiji T."/>
            <person name="Kobatake N."/>
            <person name="Inagaki H."/>
            <person name="Ikema Y."/>
            <person name="Okamoto S."/>
            <person name="Okitani R."/>
            <person name="Kawakami T."/>
            <person name="Noguchi S."/>
            <person name="Itoh T."/>
            <person name="Shigeta K."/>
            <person name="Senba T."/>
            <person name="Matsumura K."/>
            <person name="Nakajima Y."/>
            <person name="Mizuno T."/>
            <person name="Morinaga M."/>
            <person name="Sasaki M."/>
            <person name="Togashi T."/>
            <person name="Oyama M."/>
            <person name="Hata H."/>
            <person name="Watanabe M."/>
            <person name="Komatsu T."/>
            <person name="Mizushima-Sugano J."/>
            <person name="Satoh T."/>
            <person name="Shirai Y."/>
            <person name="Takahashi Y."/>
            <person name="Nakagawa K."/>
            <person name="Okumura K."/>
            <person name="Nagase T."/>
            <person name="Nomura N."/>
            <person name="Kikuchi H."/>
            <person name="Masuho Y."/>
            <person name="Yamashita R."/>
            <person name="Nakai K."/>
            <person name="Yada T."/>
            <person name="Nakamura Y."/>
            <person name="Ohara O."/>
            <person name="Isogai T."/>
            <person name="Sugano S."/>
        </authorList>
    </citation>
    <scope>NUCLEOTIDE SEQUENCE [LARGE SCALE MRNA] (ISOFORM 1)</scope>
    <source>
        <tissue>Hippocampus</tissue>
    </source>
</reference>
<reference key="5">
    <citation type="journal article" date="2005" name="Nature">
        <title>Generation and annotation of the DNA sequences of human chromosomes 2 and 4.</title>
        <authorList>
            <person name="Hillier L.W."/>
            <person name="Graves T.A."/>
            <person name="Fulton R.S."/>
            <person name="Fulton L.A."/>
            <person name="Pepin K.H."/>
            <person name="Minx P."/>
            <person name="Wagner-McPherson C."/>
            <person name="Layman D."/>
            <person name="Wylie K."/>
            <person name="Sekhon M."/>
            <person name="Becker M.C."/>
            <person name="Fewell G.A."/>
            <person name="Delehaunty K.D."/>
            <person name="Miner T.L."/>
            <person name="Nash W.E."/>
            <person name="Kremitzki C."/>
            <person name="Oddy L."/>
            <person name="Du H."/>
            <person name="Sun H."/>
            <person name="Bradshaw-Cordum H."/>
            <person name="Ali J."/>
            <person name="Carter J."/>
            <person name="Cordes M."/>
            <person name="Harris A."/>
            <person name="Isak A."/>
            <person name="van Brunt A."/>
            <person name="Nguyen C."/>
            <person name="Du F."/>
            <person name="Courtney L."/>
            <person name="Kalicki J."/>
            <person name="Ozersky P."/>
            <person name="Abbott S."/>
            <person name="Armstrong J."/>
            <person name="Belter E.A."/>
            <person name="Caruso L."/>
            <person name="Cedroni M."/>
            <person name="Cotton M."/>
            <person name="Davidson T."/>
            <person name="Desai A."/>
            <person name="Elliott G."/>
            <person name="Erb T."/>
            <person name="Fronick C."/>
            <person name="Gaige T."/>
            <person name="Haakenson W."/>
            <person name="Haglund K."/>
            <person name="Holmes A."/>
            <person name="Harkins R."/>
            <person name="Kim K."/>
            <person name="Kruchowski S.S."/>
            <person name="Strong C.M."/>
            <person name="Grewal N."/>
            <person name="Goyea E."/>
            <person name="Hou S."/>
            <person name="Levy A."/>
            <person name="Martinka S."/>
            <person name="Mead K."/>
            <person name="McLellan M.D."/>
            <person name="Meyer R."/>
            <person name="Randall-Maher J."/>
            <person name="Tomlinson C."/>
            <person name="Dauphin-Kohlberg S."/>
            <person name="Kozlowicz-Reilly A."/>
            <person name="Shah N."/>
            <person name="Swearengen-Shahid S."/>
            <person name="Snider J."/>
            <person name="Strong J.T."/>
            <person name="Thompson J."/>
            <person name="Yoakum M."/>
            <person name="Leonard S."/>
            <person name="Pearman C."/>
            <person name="Trani L."/>
            <person name="Radionenko M."/>
            <person name="Waligorski J.E."/>
            <person name="Wang C."/>
            <person name="Rock S.M."/>
            <person name="Tin-Wollam A.-M."/>
            <person name="Maupin R."/>
            <person name="Latreille P."/>
            <person name="Wendl M.C."/>
            <person name="Yang S.-P."/>
            <person name="Pohl C."/>
            <person name="Wallis J.W."/>
            <person name="Spieth J."/>
            <person name="Bieri T.A."/>
            <person name="Berkowicz N."/>
            <person name="Nelson J.O."/>
            <person name="Osborne J."/>
            <person name="Ding L."/>
            <person name="Meyer R."/>
            <person name="Sabo A."/>
            <person name="Shotland Y."/>
            <person name="Sinha P."/>
            <person name="Wohldmann P.E."/>
            <person name="Cook L.L."/>
            <person name="Hickenbotham M.T."/>
            <person name="Eldred J."/>
            <person name="Williams D."/>
            <person name="Jones T.A."/>
            <person name="She X."/>
            <person name="Ciccarelli F.D."/>
            <person name="Izaurralde E."/>
            <person name="Taylor J."/>
            <person name="Schmutz J."/>
            <person name="Myers R.M."/>
            <person name="Cox D.R."/>
            <person name="Huang X."/>
            <person name="McPherson J.D."/>
            <person name="Mardis E.R."/>
            <person name="Clifton S.W."/>
            <person name="Warren W.C."/>
            <person name="Chinwalla A.T."/>
            <person name="Eddy S.R."/>
            <person name="Marra M.A."/>
            <person name="Ovcharenko I."/>
            <person name="Furey T.S."/>
            <person name="Miller W."/>
            <person name="Eichler E.E."/>
            <person name="Bork P."/>
            <person name="Suyama M."/>
            <person name="Torrents D."/>
            <person name="Waterston R.H."/>
            <person name="Wilson R.K."/>
        </authorList>
    </citation>
    <scope>NUCLEOTIDE SEQUENCE [LARGE SCALE GENOMIC DNA]</scope>
</reference>
<reference key="6">
    <citation type="submission" date="2005-09" db="EMBL/GenBank/DDBJ databases">
        <authorList>
            <person name="Mural R.J."/>
            <person name="Istrail S."/>
            <person name="Sutton G.G."/>
            <person name="Florea L."/>
            <person name="Halpern A.L."/>
            <person name="Mobarry C.M."/>
            <person name="Lippert R."/>
            <person name="Walenz B."/>
            <person name="Shatkay H."/>
            <person name="Dew I."/>
            <person name="Miller J.R."/>
            <person name="Flanigan M.J."/>
            <person name="Edwards N.J."/>
            <person name="Bolanos R."/>
            <person name="Fasulo D."/>
            <person name="Halldorsson B.V."/>
            <person name="Hannenhalli S."/>
            <person name="Turner R."/>
            <person name="Yooseph S."/>
            <person name="Lu F."/>
            <person name="Nusskern D.R."/>
            <person name="Shue B.C."/>
            <person name="Zheng X.H."/>
            <person name="Zhong F."/>
            <person name="Delcher A.L."/>
            <person name="Huson D.H."/>
            <person name="Kravitz S.A."/>
            <person name="Mouchard L."/>
            <person name="Reinert K."/>
            <person name="Remington K.A."/>
            <person name="Clark A.G."/>
            <person name="Waterman M.S."/>
            <person name="Eichler E.E."/>
            <person name="Adams M.D."/>
            <person name="Hunkapiller M.W."/>
            <person name="Myers E.W."/>
            <person name="Venter J.C."/>
        </authorList>
    </citation>
    <scope>NUCLEOTIDE SEQUENCE [LARGE SCALE GENOMIC DNA]</scope>
</reference>
<reference key="7">
    <citation type="journal article" date="2004" name="Genome Res.">
        <title>The status, quality, and expansion of the NIH full-length cDNA project: the Mammalian Gene Collection (MGC).</title>
        <authorList>
            <consortium name="The MGC Project Team"/>
        </authorList>
    </citation>
    <scope>NUCLEOTIDE SEQUENCE [LARGE SCALE MRNA] (ISOFORMS 2 AND 3)</scope>
    <source>
        <tissue>Testis</tissue>
    </source>
</reference>
<reference key="8">
    <citation type="journal article" date="2014" name="Biochim. Biophys. Acta">
        <title>MFAP3L activation promotes colorectal cancer cell invasion and metastasis.</title>
        <authorList>
            <person name="Lou X."/>
            <person name="Kang B."/>
            <person name="Zhang J."/>
            <person name="Hao C."/>
            <person name="Tian X."/>
            <person name="Li W."/>
            <person name="Xu N."/>
            <person name="Lu Y."/>
            <person name="Liu S."/>
        </authorList>
    </citation>
    <scope>SUBCELLULAR LOCATION</scope>
    <scope>PHOSPHORYLATION AT TYR-287</scope>
    <scope>FUNCTION</scope>
</reference>
<sequence length="409" mass="45380">MDRLKSHLTVCFLPSVPFLILVSTLATAKSVTNSTLNGTNVVLGSVPVIIARTDHIIVKEGNSALINCSVYGIPDPQFKWYNSIGKLLKEEEDEKERGGGKWQMHDSGLLNITKVSFSDRGKYTCVASNIYGTVNNTVTLRVIFTSGDMGVYYMVVCLVAFTIVMVLNITRLCMMSSHLKKTEKAINEFFRTEGAEKLQKAFEIAKRIPIITSAKTLELAKVTQFKTMEFARYIEELARSVPLPPLIMNCRTIMEEIMEVVGLEEQGQNFVRHTPEGQEAADRDEVYTIPNSLKRSDSPAADSDASSLHEQPQQIAIKVSVHPQSKKEHADDQEGGQFEVKDVEETELSAEHSPETAEPSTDVTSTELTSEEPTPVEVPDKVLPPAYLEATEPAVTHDKNTCIIYESHV</sequence>